<keyword id="KW-0002">3D-structure</keyword>
<keyword id="KW-1003">Cell membrane</keyword>
<keyword id="KW-1015">Disulfide bond</keyword>
<keyword id="KW-0297">G-protein coupled receptor</keyword>
<keyword id="KW-0325">Glycoprotein</keyword>
<keyword id="KW-0472">Membrane</keyword>
<keyword id="KW-0675">Receptor</keyword>
<keyword id="KW-1185">Reference proteome</keyword>
<keyword id="KW-0807">Transducer</keyword>
<keyword id="KW-0812">Transmembrane</keyword>
<keyword id="KW-1133">Transmembrane helix</keyword>
<reference key="1">
    <citation type="journal article" date="1994" name="FEBS Lett.">
        <title>Cloning and characterisation of the human 5-HT5A serotonin receptor.</title>
        <authorList>
            <person name="Rees S."/>
            <person name="den Daas I."/>
            <person name="Foord S."/>
            <person name="Goodson S."/>
            <person name="Bull D."/>
            <person name="Kilpatrick G."/>
            <person name="Lee M."/>
        </authorList>
    </citation>
    <scope>NUCLEOTIDE SEQUENCE [GENOMIC DNA]</scope>
</reference>
<reference key="2">
    <citation type="submission" date="2002-04" db="EMBL/GenBank/DDBJ databases">
        <title>cDNA clones of human proteins involved in signal transduction sequenced by the Guthrie cDNA resource center (www.cdna.org).</title>
        <authorList>
            <person name="Puhl H.L. III"/>
            <person name="Ikeda S.R."/>
            <person name="Aronstam R.S."/>
        </authorList>
    </citation>
    <scope>NUCLEOTIDE SEQUENCE [LARGE SCALE MRNA]</scope>
    <source>
        <tissue>Brain</tissue>
    </source>
</reference>
<reference key="3">
    <citation type="journal article" date="2004" name="Genome Res.">
        <title>The status, quality, and expansion of the NIH full-length cDNA project: the Mammalian Gene Collection (MGC).</title>
        <authorList>
            <consortium name="The MGC Project Team"/>
        </authorList>
    </citation>
    <scope>NUCLEOTIDE SEQUENCE [LARGE SCALE MRNA]</scope>
    <source>
        <tissue>Brain</tissue>
    </source>
</reference>
<reference key="4">
    <citation type="journal article" date="2006" name="Science">
        <title>The consensus coding sequences of human breast and colorectal cancers.</title>
        <authorList>
            <person name="Sjoeblom T."/>
            <person name="Jones S."/>
            <person name="Wood L.D."/>
            <person name="Parsons D.W."/>
            <person name="Lin J."/>
            <person name="Barber T.D."/>
            <person name="Mandelker D."/>
            <person name="Leary R.J."/>
            <person name="Ptak J."/>
            <person name="Silliman N."/>
            <person name="Szabo S."/>
            <person name="Buckhaults P."/>
            <person name="Farrell C."/>
            <person name="Meeh P."/>
            <person name="Markowitz S.D."/>
            <person name="Willis J."/>
            <person name="Dawson D."/>
            <person name="Willson J.K.V."/>
            <person name="Gazdar A.F."/>
            <person name="Hartigan J."/>
            <person name="Wu L."/>
            <person name="Liu C."/>
            <person name="Parmigiani G."/>
            <person name="Park B.H."/>
            <person name="Bachman K.E."/>
            <person name="Papadopoulos N."/>
            <person name="Vogelstein B."/>
            <person name="Kinzler K.W."/>
            <person name="Velculescu V.E."/>
        </authorList>
    </citation>
    <scope>VARIANT [LARGE SCALE ANALYSIS] CYS-262</scope>
</reference>
<reference key="5">
    <citation type="journal article" date="1998" name="Eur. J. Pharmacol.">
        <title>The human 5-ht5A receptor couples to Gi/Go proteins and inhibits adenylate cyclase in HEK 293 cells.</title>
        <authorList>
            <person name="Francken B.J."/>
            <person name="Jurzak M."/>
            <person name="Vanhauwe J.F."/>
            <person name="Luyten W.H."/>
            <person name="Leysen J.E."/>
        </authorList>
    </citation>
    <scope>FUNCTION</scope>
    <scope>SUBCELLULAR LOCATION</scope>
</reference>
<reference evidence="12 13 14 15" key="6">
    <citation type="journal article" date="2022" name="Nat. Struct. Mol. Biol.">
        <title>Inactive and active state structures template selective tools for the human 5-HT5A receptor.</title>
        <authorList>
            <person name="Zhang S."/>
            <person name="Chen H."/>
            <person name="Zhang C."/>
            <person name="Yang Y."/>
            <person name="Popov P."/>
            <person name="Liu J."/>
            <person name="Krumm B.E."/>
            <person name="Cao C."/>
            <person name="Kim K."/>
            <person name="Xiong Y."/>
            <person name="Katritch V."/>
            <person name="Shoichet B.K."/>
            <person name="Jin J."/>
            <person name="Fay J.F."/>
            <person name="Roth B.L."/>
        </authorList>
    </citation>
    <scope>X-RAY CRYSTALLOGRAPHY (2.8 ANGSTROMS) OF 22-357</scope>
    <scope>STRUCTURE BY ELECTRON MICROSCOPY (2.73 ANGSTROMS) OF 22-357 IN COMPLEX WITH 5-CARBOXAMIDOTRYPTAMINE AGONIST; GNB1 AND GNG2</scope>
    <scope>FUNCTION</scope>
    <scope>MUTAGENESIS OF SER-142; ILE-143; MET-147; ARG-154; SER-204; ILE-223; 226-ALA-ALA-227; ALA-226; ALA-227; ARG-230; ARG-282; ALA-284; MET-286; VAL-287 AND ASN-342</scope>
</reference>
<reference evidence="16" key="7">
    <citation type="journal article" date="2022" name="Cell Discov.">
        <title>Structural insights into the ligand binding and Gi coupling of serotonin receptor 5-HT5A.</title>
        <authorList>
            <person name="Tan Y."/>
            <person name="Xu P."/>
            <person name="Huang S."/>
            <person name="Yang G."/>
            <person name="Zhou F."/>
            <person name="He X."/>
            <person name="Ma H."/>
            <person name="Xu H.E."/>
            <person name="Jiang Y."/>
        </authorList>
    </citation>
    <scope>STRUCTURE BY ELECTRON MICROSCOPY (3.1 ANGSTROMS) OF 2-357 IN COMPLEX WITH 5-CARBOXAMIDOTRYPTAMINE AGONIST; GNAI1 GNB1 AND GNG2</scope>
    <scope>FUNCTION</scope>
    <scope>MUTAGENESIS OF ASP-121 AND GLU-305</scope>
</reference>
<gene>
    <name evidence="11" type="primary">HTR5A</name>
</gene>
<proteinExistence type="evidence at protein level"/>
<feature type="chain" id="PRO_0000068969" description="5-hydroxytryptamine receptor 5A">
    <location>
        <begin position="1"/>
        <end position="357"/>
    </location>
</feature>
<feature type="topological domain" description="Extracellular" evidence="4 5 12 16">
    <location>
        <begin position="1"/>
        <end position="36"/>
    </location>
</feature>
<feature type="transmembrane region" description="Helical; Name=1" evidence="4 5 12 16">
    <location>
        <begin position="37"/>
        <end position="63"/>
    </location>
</feature>
<feature type="topological domain" description="Cytoplasmic" evidence="4 5 12 16">
    <location>
        <begin position="64"/>
        <end position="76"/>
    </location>
</feature>
<feature type="transmembrane region" description="Helical; Name=2" evidence="4 5 12 16">
    <location>
        <begin position="77"/>
        <end position="103"/>
    </location>
</feature>
<feature type="topological domain" description="Extracellular" evidence="4 5 12 16">
    <location>
        <begin position="104"/>
        <end position="114"/>
    </location>
</feature>
<feature type="transmembrane region" description="Helical; Name=3" evidence="4 5 12 16">
    <location>
        <begin position="115"/>
        <end position="137"/>
    </location>
</feature>
<feature type="topological domain" description="Cytoplasmic" evidence="4 5 12 16">
    <location>
        <begin position="138"/>
        <end position="155"/>
    </location>
</feature>
<feature type="transmembrane region" description="Helical; Name=4" evidence="4 5 12 16">
    <location>
        <begin position="156"/>
        <end position="176"/>
    </location>
</feature>
<feature type="topological domain" description="Extracellular" evidence="4 5 12 16">
    <location>
        <begin position="177"/>
        <end position="198"/>
    </location>
</feature>
<feature type="transmembrane region" description="Helical; Name=5" evidence="4 5 12 16">
    <location>
        <begin position="199"/>
        <end position="220"/>
    </location>
</feature>
<feature type="topological domain" description="Cytoplasmic" evidence="4 5 12 16">
    <location>
        <begin position="221"/>
        <end position="287"/>
    </location>
</feature>
<feature type="transmembrane region" description="Helical; Name=6" evidence="4 5 12 16">
    <location>
        <begin position="288"/>
        <end position="312"/>
    </location>
</feature>
<feature type="topological domain" description="Extracellular" evidence="4 5 12 16">
    <location>
        <begin position="313"/>
        <end position="314"/>
    </location>
</feature>
<feature type="transmembrane region" description="Helical; Name=7" evidence="4 5 12 16">
    <location>
        <begin position="315"/>
        <end position="339"/>
    </location>
</feature>
<feature type="topological domain" description="Cytoplasmic" evidence="4 5 12 16">
    <location>
        <begin position="340"/>
        <end position="357"/>
    </location>
</feature>
<feature type="binding site" evidence="9 10 13 14 16">
    <location>
        <position position="121"/>
    </location>
    <ligand>
        <name>serotonin</name>
        <dbReference type="ChEBI" id="CHEBI:350546"/>
    </ligand>
</feature>
<feature type="glycosylation site" description="N-linked (GlcNAc...) asparagine" evidence="1">
    <location>
        <position position="6"/>
    </location>
</feature>
<feature type="glycosylation site" description="N-linked (GlcNAc...) asparagine" evidence="1">
    <location>
        <position position="21"/>
    </location>
</feature>
<feature type="disulfide bond" evidence="2 4 5 12 16">
    <location>
        <begin position="114"/>
        <end position="192"/>
    </location>
</feature>
<feature type="sequence variant" id="VAR_035753" description="In a colorectal cancer sample; somatic mutation; dbSNP:rs746290830." evidence="3">
    <original>R</original>
    <variation>C</variation>
    <location>
        <position position="262"/>
    </location>
</feature>
<feature type="mutagenesis site" description="Abolished G(i)/(o)-coupled receptor activity." evidence="4">
    <original>D</original>
    <variation>A</variation>
    <location>
        <position position="121"/>
    </location>
</feature>
<feature type="mutagenesis site" description="Does not affect G(i)/(o)-coupled receptor activity." evidence="5">
    <original>S</original>
    <variation>A</variation>
    <location>
        <position position="142"/>
    </location>
</feature>
<feature type="mutagenesis site" description="Strongly decreased G(i)/(o)-coupled receptor activity." evidence="5">
    <original>I</original>
    <variation>A</variation>
    <location>
        <position position="143"/>
    </location>
</feature>
<feature type="mutagenesis site" description="Does not affect G(i)/(o)-coupled receptor activity." evidence="5">
    <original>M</original>
    <variation>I</variation>
    <location>
        <position position="147"/>
    </location>
</feature>
<feature type="mutagenesis site" description="Abolished G(i)/(o)-coupled receptor activity." evidence="5">
    <original>R</original>
    <variation>A</variation>
    <location>
        <position position="154"/>
    </location>
</feature>
<feature type="mutagenesis site" description="Decreased G(i)/(o)-coupled receptor activity." evidence="5">
    <original>S</original>
    <variation>C</variation>
    <location>
        <position position="204"/>
    </location>
</feature>
<feature type="mutagenesis site" description="Strongly decreased G(i)/(o)-coupled receptor activity." evidence="5">
    <original>I</original>
    <variation>A</variation>
    <location>
        <position position="223"/>
    </location>
</feature>
<feature type="mutagenesis site" description="Strongly increased G(i)/(o)-coupled receptor activity." evidence="5">
    <original>AA</original>
    <variation>VL</variation>
    <location>
        <begin position="226"/>
        <end position="227"/>
    </location>
</feature>
<feature type="mutagenesis site" description="Strongly increased G(i)/(o)-coupled receptor activity." evidence="5">
    <original>A</original>
    <variation>V</variation>
    <location>
        <position position="226"/>
    </location>
</feature>
<feature type="mutagenesis site" description="Increased G(i)/(o)-coupled receptor activity." evidence="5">
    <original>A</original>
    <variation>L</variation>
    <location>
        <position position="227"/>
    </location>
</feature>
<feature type="mutagenesis site" description="Slightly decreased G(i)/(o)-coupled receptor activity." evidence="5">
    <original>R</original>
    <variation>A</variation>
    <location>
        <position position="230"/>
    </location>
</feature>
<feature type="mutagenesis site" description="Strongly decreased G(i)/(o)-coupled receptor activity." evidence="5">
    <original>R</original>
    <variation>A</variation>
    <location>
        <position position="282"/>
    </location>
</feature>
<feature type="mutagenesis site" description="Strongly increased G(i)/(o)-coupled receptor activity." evidence="5">
    <original>A</original>
    <variation>R</variation>
    <location>
        <position position="284"/>
    </location>
</feature>
<feature type="mutagenesis site" description="Slightly decreased G(i)/(o)-coupled receptor activity." evidence="5">
    <original>M</original>
    <variation>A</variation>
    <location>
        <position position="286"/>
    </location>
</feature>
<feature type="mutagenesis site" description="Abolished G(i)/(o)-coupled receptor activity." evidence="5">
    <original>V</original>
    <variation>A</variation>
    <location>
        <position position="287"/>
    </location>
</feature>
<feature type="mutagenesis site" description="Increased G(i)/(o)-coupled receptor activity." evidence="4">
    <original>E</original>
    <variation>A</variation>
    <location>
        <position position="305"/>
    </location>
</feature>
<feature type="mutagenesis site" description="Strongly decreased G(i)/(o)-coupled receptor activity." evidence="5">
    <original>N</original>
    <variation>A</variation>
    <location>
        <position position="342"/>
    </location>
</feature>
<feature type="helix" evidence="17">
    <location>
        <begin position="42"/>
        <end position="67"/>
    </location>
</feature>
<feature type="helix" evidence="18">
    <location>
        <begin position="69"/>
        <end position="71"/>
    </location>
</feature>
<feature type="helix" evidence="17">
    <location>
        <begin position="76"/>
        <end position="92"/>
    </location>
</feature>
<feature type="helix" evidence="17">
    <location>
        <begin position="94"/>
        <end position="97"/>
    </location>
</feature>
<feature type="turn" evidence="17">
    <location>
        <begin position="98"/>
        <end position="105"/>
    </location>
</feature>
<feature type="helix" evidence="17">
    <location>
        <begin position="111"/>
        <end position="144"/>
    </location>
</feature>
<feature type="turn" evidence="17">
    <location>
        <begin position="146"/>
        <end position="148"/>
    </location>
</feature>
<feature type="helix" evidence="17">
    <location>
        <begin position="152"/>
        <end position="178"/>
    </location>
</feature>
<feature type="strand" evidence="17">
    <location>
        <begin position="184"/>
        <end position="186"/>
    </location>
</feature>
<feature type="helix" evidence="17">
    <location>
        <begin position="188"/>
        <end position="190"/>
    </location>
</feature>
<feature type="helix" evidence="17">
    <location>
        <begin position="198"/>
        <end position="208"/>
    </location>
</feature>
<feature type="helix" evidence="17">
    <location>
        <begin position="210"/>
        <end position="230"/>
    </location>
</feature>
<feature type="helix" evidence="17">
    <location>
        <begin position="278"/>
        <end position="307"/>
    </location>
</feature>
<feature type="turn" evidence="17">
    <location>
        <begin position="308"/>
        <end position="310"/>
    </location>
</feature>
<feature type="helix" evidence="17">
    <location>
        <begin position="317"/>
        <end position="333"/>
    </location>
</feature>
<feature type="helix" evidence="17">
    <location>
        <begin position="335"/>
        <end position="338"/>
    </location>
</feature>
<feature type="turn" evidence="17">
    <location>
        <begin position="339"/>
        <end position="341"/>
    </location>
</feature>
<feature type="helix" evidence="17">
    <location>
        <begin position="343"/>
        <end position="351"/>
    </location>
</feature>
<sequence length="357" mass="40255">MDLPVNLTSFSLSTPSPLETNHSLGKDDLRPSSPLLSVFGVLILTLLGFLVAATFAWNLLVLATILRVRTFHRVPHNLVASMAVSDVLVAALVMPLSLVHELSGRRWQLGRRLCQLWIACDVLCCTASIWNVTAIALDRYWSITRHMEYTLRTRKCVSNVMIALTWALSAVISLAPLLFGWGETYSEGSEECQVSREPSYAVFSTVGAFYLPLCVVLFVYWKIYKAAKFRVGSRKTNSVSPISEAVEVKDSAKQPQMVFTVRHATVTFQPEGDTWREQKEQRAALMVGILIGVFVLCWIPFFLTELISPLCSCDIPAIWKSIFLWLGYSNSFFNPLIYTAFNKNYNSAFKNFFSRQH</sequence>
<dbReference type="EMBL" id="X81411">
    <property type="protein sequence ID" value="CAA57168.1"/>
    <property type="molecule type" value="Genomic_DNA"/>
</dbReference>
<dbReference type="EMBL" id="X81412">
    <property type="protein sequence ID" value="CAA57168.1"/>
    <property type="status" value="JOINED"/>
    <property type="molecule type" value="Genomic_DNA"/>
</dbReference>
<dbReference type="EMBL" id="AF498985">
    <property type="protein sequence ID" value="AAM21132.1"/>
    <property type="molecule type" value="mRNA"/>
</dbReference>
<dbReference type="EMBL" id="BC112021">
    <property type="protein sequence ID" value="AAI12022.1"/>
    <property type="molecule type" value="mRNA"/>
</dbReference>
<dbReference type="CCDS" id="CCDS5936.1"/>
<dbReference type="PIR" id="I37107">
    <property type="entry name" value="I37107"/>
</dbReference>
<dbReference type="RefSeq" id="NP_076917.1">
    <property type="nucleotide sequence ID" value="NM_024012.4"/>
</dbReference>
<dbReference type="PDB" id="7UM4">
    <property type="method" value="X-ray"/>
    <property type="resolution" value="2.80 A"/>
    <property type="chains" value="A=22-357"/>
</dbReference>
<dbReference type="PDB" id="7UM5">
    <property type="method" value="EM"/>
    <property type="resolution" value="2.73 A"/>
    <property type="chains" value="A=32-357"/>
</dbReference>
<dbReference type="PDB" id="7UM6">
    <property type="method" value="EM"/>
    <property type="resolution" value="2.79 A"/>
    <property type="chains" value="A=32-357"/>
</dbReference>
<dbReference type="PDB" id="7UM7">
    <property type="method" value="EM"/>
    <property type="resolution" value="2.75 A"/>
    <property type="chains" value="A=32-357"/>
</dbReference>
<dbReference type="PDB" id="7X5H">
    <property type="method" value="EM"/>
    <property type="resolution" value="3.10 A"/>
    <property type="chains" value="R=2-357"/>
</dbReference>
<dbReference type="PDBsum" id="7UM4"/>
<dbReference type="PDBsum" id="7UM5"/>
<dbReference type="PDBsum" id="7UM6"/>
<dbReference type="PDBsum" id="7UM7"/>
<dbReference type="PDBsum" id="7X5H"/>
<dbReference type="EMDB" id="EMD-26597"/>
<dbReference type="EMDB" id="EMD-26598"/>
<dbReference type="EMDB" id="EMD-26599"/>
<dbReference type="EMDB" id="EMD-33014"/>
<dbReference type="SMR" id="P47898"/>
<dbReference type="BioGRID" id="109593">
    <property type="interactions" value="2"/>
</dbReference>
<dbReference type="FunCoup" id="P47898">
    <property type="interactions" value="1076"/>
</dbReference>
<dbReference type="IntAct" id="P47898">
    <property type="interactions" value="1"/>
</dbReference>
<dbReference type="MINT" id="P47898"/>
<dbReference type="STRING" id="9606.ENSP00000287907"/>
<dbReference type="BindingDB" id="P47898"/>
<dbReference type="ChEMBL" id="CHEMBL3426"/>
<dbReference type="DrugBank" id="DB01238">
    <property type="generic name" value="Aripiprazole"/>
</dbReference>
<dbReference type="DrugBank" id="DB06216">
    <property type="generic name" value="Asenapine"/>
</dbReference>
<dbReference type="DrugBank" id="DB01445">
    <property type="generic name" value="Bufotenine"/>
</dbReference>
<dbReference type="DrugBank" id="DB00408">
    <property type="generic name" value="Loxapine"/>
</dbReference>
<dbReference type="DrugBank" id="DB13520">
    <property type="generic name" value="Metergoline"/>
</dbReference>
<dbReference type="DrugBank" id="DB08839">
    <property type="generic name" value="Serotonin"/>
</dbReference>
<dbReference type="DrugBank" id="DB00246">
    <property type="generic name" value="Ziprasidone"/>
</dbReference>
<dbReference type="DrugCentral" id="P47898"/>
<dbReference type="GuidetoPHARMACOLOGY" id="10"/>
<dbReference type="GlyCosmos" id="P47898">
    <property type="glycosylation" value="2 sites, No reported glycans"/>
</dbReference>
<dbReference type="GlyGen" id="P47898">
    <property type="glycosylation" value="2 sites"/>
</dbReference>
<dbReference type="iPTMnet" id="P47898"/>
<dbReference type="PhosphoSitePlus" id="P47898"/>
<dbReference type="BioMuta" id="HTR5A"/>
<dbReference type="DMDM" id="1345607"/>
<dbReference type="jPOST" id="P47898"/>
<dbReference type="PaxDb" id="9606-ENSP00000287907"/>
<dbReference type="PeptideAtlas" id="P47898"/>
<dbReference type="Antibodypedia" id="18848">
    <property type="antibodies" value="344 antibodies from 29 providers"/>
</dbReference>
<dbReference type="DNASU" id="3361"/>
<dbReference type="Ensembl" id="ENST00000287907.3">
    <property type="protein sequence ID" value="ENSP00000287907.2"/>
    <property type="gene ID" value="ENSG00000157219.5"/>
</dbReference>
<dbReference type="GeneID" id="3361"/>
<dbReference type="KEGG" id="hsa:3361"/>
<dbReference type="MANE-Select" id="ENST00000287907.3">
    <property type="protein sequence ID" value="ENSP00000287907.2"/>
    <property type="RefSeq nucleotide sequence ID" value="NM_024012.4"/>
    <property type="RefSeq protein sequence ID" value="NP_076917.1"/>
</dbReference>
<dbReference type="UCSC" id="uc003wlu.3">
    <property type="organism name" value="human"/>
</dbReference>
<dbReference type="AGR" id="HGNC:5300"/>
<dbReference type="CTD" id="3361"/>
<dbReference type="DisGeNET" id="3361"/>
<dbReference type="GeneCards" id="HTR5A"/>
<dbReference type="HGNC" id="HGNC:5300">
    <property type="gene designation" value="HTR5A"/>
</dbReference>
<dbReference type="HPA" id="ENSG00000157219">
    <property type="expression patterns" value="Tissue enriched (brain)"/>
</dbReference>
<dbReference type="MIM" id="601305">
    <property type="type" value="gene"/>
</dbReference>
<dbReference type="neXtProt" id="NX_P47898"/>
<dbReference type="OpenTargets" id="ENSG00000157219"/>
<dbReference type="PharmGKB" id="PA29558"/>
<dbReference type="VEuPathDB" id="HostDB:ENSG00000157219"/>
<dbReference type="eggNOG" id="KOG3656">
    <property type="taxonomic scope" value="Eukaryota"/>
</dbReference>
<dbReference type="GeneTree" id="ENSGT01010000222287"/>
<dbReference type="HOGENOM" id="CLU_009579_11_6_1"/>
<dbReference type="InParanoid" id="P47898"/>
<dbReference type="OMA" id="PAVWKSI"/>
<dbReference type="OrthoDB" id="5957871at2759"/>
<dbReference type="PAN-GO" id="P47898">
    <property type="GO annotations" value="8 GO annotations based on evolutionary models"/>
</dbReference>
<dbReference type="PhylomeDB" id="P47898"/>
<dbReference type="TreeFam" id="TF316350"/>
<dbReference type="PathwayCommons" id="P47898"/>
<dbReference type="Reactome" id="R-HSA-390666">
    <property type="pathway name" value="Serotonin receptors"/>
</dbReference>
<dbReference type="Reactome" id="R-HSA-418594">
    <property type="pathway name" value="G alpha (i) signalling events"/>
</dbReference>
<dbReference type="SignaLink" id="P47898"/>
<dbReference type="SIGNOR" id="P47898"/>
<dbReference type="BioGRID-ORCS" id="3361">
    <property type="hits" value="9 hits in 1140 CRISPR screens"/>
</dbReference>
<dbReference type="GeneWiki" id="5-HT5A_receptor"/>
<dbReference type="GenomeRNAi" id="3361"/>
<dbReference type="Pharos" id="P47898">
    <property type="development level" value="Tchem"/>
</dbReference>
<dbReference type="PRO" id="PR:P47898"/>
<dbReference type="Proteomes" id="UP000005640">
    <property type="component" value="Chromosome 7"/>
</dbReference>
<dbReference type="RNAct" id="P47898">
    <property type="molecule type" value="protein"/>
</dbReference>
<dbReference type="Bgee" id="ENSG00000157219">
    <property type="expression patterns" value="Expressed in cerebellar hemisphere and 47 other cell types or tissues"/>
</dbReference>
<dbReference type="ExpressionAtlas" id="P47898">
    <property type="expression patterns" value="baseline and differential"/>
</dbReference>
<dbReference type="GO" id="GO:0030425">
    <property type="term" value="C:dendrite"/>
    <property type="evidence" value="ECO:0000318"/>
    <property type="project" value="GO_Central"/>
</dbReference>
<dbReference type="GO" id="GO:0043204">
    <property type="term" value="C:perikaryon"/>
    <property type="evidence" value="ECO:0007669"/>
    <property type="project" value="Ensembl"/>
</dbReference>
<dbReference type="GO" id="GO:0005886">
    <property type="term" value="C:plasma membrane"/>
    <property type="evidence" value="ECO:0000314"/>
    <property type="project" value="UniProtKB"/>
</dbReference>
<dbReference type="GO" id="GO:0099634">
    <property type="term" value="C:postsynaptic specialization membrane"/>
    <property type="evidence" value="ECO:0007669"/>
    <property type="project" value="Ensembl"/>
</dbReference>
<dbReference type="GO" id="GO:0004993">
    <property type="term" value="F:G protein-coupled serotonin receptor activity"/>
    <property type="evidence" value="ECO:0000314"/>
    <property type="project" value="MGI"/>
</dbReference>
<dbReference type="GO" id="GO:0001586">
    <property type="term" value="F:Gi/o-coupled serotonin receptor activity"/>
    <property type="evidence" value="ECO:0000314"/>
    <property type="project" value="UniProtKB"/>
</dbReference>
<dbReference type="GO" id="GO:0030594">
    <property type="term" value="F:neurotransmitter receptor activity"/>
    <property type="evidence" value="ECO:0000318"/>
    <property type="project" value="GO_Central"/>
</dbReference>
<dbReference type="GO" id="GO:0099589">
    <property type="term" value="F:serotonin receptor activity"/>
    <property type="evidence" value="ECO:0000314"/>
    <property type="project" value="UniProt"/>
</dbReference>
<dbReference type="GO" id="GO:0007189">
    <property type="term" value="P:adenylate cyclase-activating G protein-coupled receptor signaling pathway"/>
    <property type="evidence" value="ECO:0007669"/>
    <property type="project" value="Ensembl"/>
</dbReference>
<dbReference type="GO" id="GO:0007198">
    <property type="term" value="P:adenylate cyclase-inhibiting serotonin receptor signaling pathway"/>
    <property type="evidence" value="ECO:0000314"/>
    <property type="project" value="UniProtKB"/>
</dbReference>
<dbReference type="GO" id="GO:0007268">
    <property type="term" value="P:chemical synaptic transmission"/>
    <property type="evidence" value="ECO:0000318"/>
    <property type="project" value="GO_Central"/>
</dbReference>
<dbReference type="GO" id="GO:0007186">
    <property type="term" value="P:G protein-coupled receptor signaling pathway"/>
    <property type="evidence" value="ECO:0000304"/>
    <property type="project" value="ProtInc"/>
</dbReference>
<dbReference type="GO" id="GO:0007187">
    <property type="term" value="P:G protein-coupled receptor signaling pathway, coupled to cyclic nucleotide second messenger"/>
    <property type="evidence" value="ECO:0000318"/>
    <property type="project" value="GO_Central"/>
</dbReference>
<dbReference type="GO" id="GO:0021766">
    <property type="term" value="P:hippocampus development"/>
    <property type="evidence" value="ECO:0007669"/>
    <property type="project" value="Ensembl"/>
</dbReference>
<dbReference type="GO" id="GO:0032355">
    <property type="term" value="P:response to estradiol"/>
    <property type="evidence" value="ECO:0007669"/>
    <property type="project" value="Ensembl"/>
</dbReference>
<dbReference type="CDD" id="cd15328">
    <property type="entry name" value="7tmA_5-HT5"/>
    <property type="match status" value="1"/>
</dbReference>
<dbReference type="FunFam" id="1.20.1070.10:FF:000089">
    <property type="entry name" value="5-hydroxytryptamine receptor 5A"/>
    <property type="match status" value="1"/>
</dbReference>
<dbReference type="Gene3D" id="1.20.1070.10">
    <property type="entry name" value="Rhodopsin 7-helix transmembrane proteins"/>
    <property type="match status" value="1"/>
</dbReference>
<dbReference type="InterPro" id="IPR001397">
    <property type="entry name" value="5HT5A_rcpt"/>
</dbReference>
<dbReference type="InterPro" id="IPR002231">
    <property type="entry name" value="5HT_rcpt"/>
</dbReference>
<dbReference type="InterPro" id="IPR000276">
    <property type="entry name" value="GPCR_Rhodpsn"/>
</dbReference>
<dbReference type="InterPro" id="IPR017452">
    <property type="entry name" value="GPCR_Rhodpsn_7TM"/>
</dbReference>
<dbReference type="PANTHER" id="PTHR24248:SF202">
    <property type="entry name" value="5-HYDROXYTRYPTAMINE RECEPTOR 5A"/>
    <property type="match status" value="1"/>
</dbReference>
<dbReference type="PANTHER" id="PTHR24248">
    <property type="entry name" value="ADRENERGIC RECEPTOR-RELATED G-PROTEIN COUPLED RECEPTOR"/>
    <property type="match status" value="1"/>
</dbReference>
<dbReference type="Pfam" id="PF00001">
    <property type="entry name" value="7tm_1"/>
    <property type="match status" value="1"/>
</dbReference>
<dbReference type="PRINTS" id="PR00518">
    <property type="entry name" value="5HT5ARECEPTR"/>
</dbReference>
<dbReference type="PRINTS" id="PR01101">
    <property type="entry name" value="5HTRECEPTOR"/>
</dbReference>
<dbReference type="PRINTS" id="PR00237">
    <property type="entry name" value="GPCRRHODOPSN"/>
</dbReference>
<dbReference type="SUPFAM" id="SSF81321">
    <property type="entry name" value="Family A G protein-coupled receptor-like"/>
    <property type="match status" value="1"/>
</dbReference>
<dbReference type="PROSITE" id="PS00237">
    <property type="entry name" value="G_PROTEIN_RECEP_F1_1"/>
    <property type="match status" value="1"/>
</dbReference>
<dbReference type="PROSITE" id="PS50262">
    <property type="entry name" value="G_PROTEIN_RECEP_F1_2"/>
    <property type="match status" value="1"/>
</dbReference>
<comment type="function">
    <text evidence="4 5 6">G-protein coupled receptor for 5-hydroxytryptamine (serotonin), a biogenic hormone that functions as a neurotransmitter, a hormone and a mitogen (PubMed:35610220, PubMed:35835867, PubMed:9865521). Also functions as a receptor for ergot alkaloid derivatives and other psychoactive substances (PubMed:35835867). Ligand binding causes a conformation change that triggers signaling via guanine nucleotide-binding proteins (G proteins) and modulates the activity of downstream effectors (PubMed:35610220, PubMed:35835867, PubMed:9865521). HTR5A is coupled to G(i)/G(o) G alpha proteins and mediates inhibitory neurotransmission: signaling inhibits adenylate cyclase activity and activates a phosphatidylinositol-calcium second messenger system that regulates the release of Ca(2+) ions from intracellular stores (PubMed:35610220, PubMed:35835867, PubMed:9865521).</text>
</comment>
<comment type="subcellular location">
    <subcellularLocation>
        <location evidence="6">Cell membrane</location>
        <topology evidence="4 5">Multi-pass membrane protein</topology>
    </subcellularLocation>
</comment>
<comment type="similarity">
    <text evidence="2">Belongs to the G-protein coupled receptor 1 family.</text>
</comment>
<name>5HT5A_HUMAN</name>
<evidence type="ECO:0000255" key="1"/>
<evidence type="ECO:0000255" key="2">
    <source>
        <dbReference type="PROSITE-ProRule" id="PRU00521"/>
    </source>
</evidence>
<evidence type="ECO:0000269" key="3">
    <source>
    </source>
</evidence>
<evidence type="ECO:0000269" key="4">
    <source>
    </source>
</evidence>
<evidence type="ECO:0000269" key="5">
    <source>
    </source>
</evidence>
<evidence type="ECO:0000269" key="6">
    <source>
    </source>
</evidence>
<evidence type="ECO:0000303" key="7">
    <source>
    </source>
</evidence>
<evidence type="ECO:0000305" key="8"/>
<evidence type="ECO:0000305" key="9">
    <source>
    </source>
</evidence>
<evidence type="ECO:0000305" key="10">
    <source>
    </source>
</evidence>
<evidence type="ECO:0000312" key="11">
    <source>
        <dbReference type="HGNC" id="HGNC:5300"/>
    </source>
</evidence>
<evidence type="ECO:0007744" key="12">
    <source>
        <dbReference type="PDB" id="7UM4"/>
    </source>
</evidence>
<evidence type="ECO:0007744" key="13">
    <source>
        <dbReference type="PDB" id="7UM5"/>
    </source>
</evidence>
<evidence type="ECO:0007744" key="14">
    <source>
        <dbReference type="PDB" id="7UM6"/>
    </source>
</evidence>
<evidence type="ECO:0007744" key="15">
    <source>
        <dbReference type="PDB" id="7UM7"/>
    </source>
</evidence>
<evidence type="ECO:0007744" key="16">
    <source>
        <dbReference type="PDB" id="7X5H"/>
    </source>
</evidence>
<evidence type="ECO:0007829" key="17">
    <source>
        <dbReference type="PDB" id="7UM5"/>
    </source>
</evidence>
<evidence type="ECO:0007829" key="18">
    <source>
        <dbReference type="PDB" id="7UM6"/>
    </source>
</evidence>
<accession>P47898</accession>
<accession>Q2M2D2</accession>
<protein>
    <recommendedName>
        <fullName evidence="8">5-hydroxytryptamine receptor 5A</fullName>
        <shortName evidence="7">5-HT-5</shortName>
        <shortName evidence="7">5-HT-5A</shortName>
        <shortName evidence="7">5-HT5A</shortName>
    </recommendedName>
    <alternativeName>
        <fullName evidence="7">Serotonin receptor 5A</fullName>
    </alternativeName>
</protein>
<organism>
    <name type="scientific">Homo sapiens</name>
    <name type="common">Human</name>
    <dbReference type="NCBI Taxonomy" id="9606"/>
    <lineage>
        <taxon>Eukaryota</taxon>
        <taxon>Metazoa</taxon>
        <taxon>Chordata</taxon>
        <taxon>Craniata</taxon>
        <taxon>Vertebrata</taxon>
        <taxon>Euteleostomi</taxon>
        <taxon>Mammalia</taxon>
        <taxon>Eutheria</taxon>
        <taxon>Euarchontoglires</taxon>
        <taxon>Primates</taxon>
        <taxon>Haplorrhini</taxon>
        <taxon>Catarrhini</taxon>
        <taxon>Hominidae</taxon>
        <taxon>Homo</taxon>
    </lineage>
</organism>